<name>DUT_ECO5E</name>
<organism>
    <name type="scientific">Escherichia coli O157:H7 (strain EC4115 / EHEC)</name>
    <dbReference type="NCBI Taxonomy" id="444450"/>
    <lineage>
        <taxon>Bacteria</taxon>
        <taxon>Pseudomonadati</taxon>
        <taxon>Pseudomonadota</taxon>
        <taxon>Gammaproteobacteria</taxon>
        <taxon>Enterobacterales</taxon>
        <taxon>Enterobacteriaceae</taxon>
        <taxon>Escherichia</taxon>
    </lineage>
</organism>
<protein>
    <recommendedName>
        <fullName evidence="1">Deoxyuridine 5'-triphosphate nucleotidohydrolase</fullName>
        <shortName evidence="1">dUTPase</shortName>
        <ecNumber evidence="1">3.6.1.23</ecNumber>
    </recommendedName>
    <alternativeName>
        <fullName evidence="1">dUTP pyrophosphatase</fullName>
    </alternativeName>
</protein>
<reference key="1">
    <citation type="journal article" date="2011" name="Proc. Natl. Acad. Sci. U.S.A.">
        <title>Genomic anatomy of Escherichia coli O157:H7 outbreaks.</title>
        <authorList>
            <person name="Eppinger M."/>
            <person name="Mammel M.K."/>
            <person name="Leclerc J.E."/>
            <person name="Ravel J."/>
            <person name="Cebula T.A."/>
        </authorList>
    </citation>
    <scope>NUCLEOTIDE SEQUENCE [LARGE SCALE GENOMIC DNA]</scope>
    <source>
        <strain>EC4115 / EHEC</strain>
    </source>
</reference>
<dbReference type="EC" id="3.6.1.23" evidence="1"/>
<dbReference type="EMBL" id="CP001164">
    <property type="protein sequence ID" value="ACI35165.1"/>
    <property type="molecule type" value="Genomic_DNA"/>
</dbReference>
<dbReference type="RefSeq" id="WP_000976070.1">
    <property type="nucleotide sequence ID" value="NC_011353.1"/>
</dbReference>
<dbReference type="SMR" id="B5YWD8"/>
<dbReference type="GeneID" id="93778355"/>
<dbReference type="KEGG" id="ecf:ECH74115_5010"/>
<dbReference type="HOGENOM" id="CLU_068508_1_1_6"/>
<dbReference type="UniPathway" id="UPA00610">
    <property type="reaction ID" value="UER00666"/>
</dbReference>
<dbReference type="GO" id="GO:0004170">
    <property type="term" value="F:dUTP diphosphatase activity"/>
    <property type="evidence" value="ECO:0007669"/>
    <property type="project" value="UniProtKB-UniRule"/>
</dbReference>
<dbReference type="GO" id="GO:0000287">
    <property type="term" value="F:magnesium ion binding"/>
    <property type="evidence" value="ECO:0007669"/>
    <property type="project" value="UniProtKB-UniRule"/>
</dbReference>
<dbReference type="GO" id="GO:0006226">
    <property type="term" value="P:dUMP biosynthetic process"/>
    <property type="evidence" value="ECO:0007669"/>
    <property type="project" value="UniProtKB-UniRule"/>
</dbReference>
<dbReference type="GO" id="GO:0046081">
    <property type="term" value="P:dUTP catabolic process"/>
    <property type="evidence" value="ECO:0007669"/>
    <property type="project" value="InterPro"/>
</dbReference>
<dbReference type="CDD" id="cd07557">
    <property type="entry name" value="trimeric_dUTPase"/>
    <property type="match status" value="1"/>
</dbReference>
<dbReference type="FunFam" id="2.70.40.10:FF:000002">
    <property type="entry name" value="dUTP diphosphatase"/>
    <property type="match status" value="1"/>
</dbReference>
<dbReference type="Gene3D" id="2.70.40.10">
    <property type="match status" value="1"/>
</dbReference>
<dbReference type="HAMAP" id="MF_00116">
    <property type="entry name" value="dUTPase_bact"/>
    <property type="match status" value="1"/>
</dbReference>
<dbReference type="InterPro" id="IPR008181">
    <property type="entry name" value="dUTPase"/>
</dbReference>
<dbReference type="InterPro" id="IPR029054">
    <property type="entry name" value="dUTPase-like"/>
</dbReference>
<dbReference type="InterPro" id="IPR036157">
    <property type="entry name" value="dUTPase-like_sf"/>
</dbReference>
<dbReference type="InterPro" id="IPR033704">
    <property type="entry name" value="dUTPase_trimeric"/>
</dbReference>
<dbReference type="NCBIfam" id="TIGR00576">
    <property type="entry name" value="dut"/>
    <property type="match status" value="1"/>
</dbReference>
<dbReference type="NCBIfam" id="NF001862">
    <property type="entry name" value="PRK00601.1"/>
    <property type="match status" value="1"/>
</dbReference>
<dbReference type="PANTHER" id="PTHR11241">
    <property type="entry name" value="DEOXYURIDINE 5'-TRIPHOSPHATE NUCLEOTIDOHYDROLASE"/>
    <property type="match status" value="1"/>
</dbReference>
<dbReference type="PANTHER" id="PTHR11241:SF0">
    <property type="entry name" value="DEOXYURIDINE 5'-TRIPHOSPHATE NUCLEOTIDOHYDROLASE"/>
    <property type="match status" value="1"/>
</dbReference>
<dbReference type="Pfam" id="PF00692">
    <property type="entry name" value="dUTPase"/>
    <property type="match status" value="1"/>
</dbReference>
<dbReference type="SUPFAM" id="SSF51283">
    <property type="entry name" value="dUTPase-like"/>
    <property type="match status" value="1"/>
</dbReference>
<feature type="chain" id="PRO_1000094958" description="Deoxyuridine 5'-triphosphate nucleotidohydrolase">
    <location>
        <begin position="1"/>
        <end position="152"/>
    </location>
</feature>
<feature type="binding site" evidence="1">
    <location>
        <begin position="71"/>
        <end position="73"/>
    </location>
    <ligand>
        <name>substrate</name>
    </ligand>
</feature>
<feature type="binding site" evidence="1">
    <location>
        <position position="84"/>
    </location>
    <ligand>
        <name>substrate</name>
    </ligand>
</feature>
<feature type="binding site" evidence="1">
    <location>
        <begin position="88"/>
        <end position="90"/>
    </location>
    <ligand>
        <name>substrate</name>
    </ligand>
</feature>
<feature type="binding site" evidence="1">
    <location>
        <position position="98"/>
    </location>
    <ligand>
        <name>substrate</name>
    </ligand>
</feature>
<accession>B5YWD8</accession>
<keyword id="KW-0378">Hydrolase</keyword>
<keyword id="KW-0460">Magnesium</keyword>
<keyword id="KW-0479">Metal-binding</keyword>
<keyword id="KW-0546">Nucleotide metabolism</keyword>
<evidence type="ECO:0000255" key="1">
    <source>
        <dbReference type="HAMAP-Rule" id="MF_00116"/>
    </source>
</evidence>
<sequence>MMKKIDVKILDPRVGKEFPLPTYATSGSAGLDLRACLDDAVELAPGDTTLVPTGLAIHIADPSLAAMMLPRSGLGHKHGIVLGNLVGLIDSDYQGQLMISVWNRGQDSFTIQPGERIAQMIFVPVVQAEFNLVEDFDATDRGEGGFGHSGRQ</sequence>
<gene>
    <name evidence="1" type="primary">dut</name>
    <name type="ordered locus">ECH74115_5010</name>
</gene>
<proteinExistence type="inferred from homology"/>
<comment type="function">
    <text evidence="1">This enzyme is involved in nucleotide metabolism: it produces dUMP, the immediate precursor of thymidine nucleotides and it decreases the intracellular concentration of dUTP so that uracil cannot be incorporated into DNA.</text>
</comment>
<comment type="catalytic activity">
    <reaction evidence="1">
        <text>dUTP + H2O = dUMP + diphosphate + H(+)</text>
        <dbReference type="Rhea" id="RHEA:10248"/>
        <dbReference type="ChEBI" id="CHEBI:15377"/>
        <dbReference type="ChEBI" id="CHEBI:15378"/>
        <dbReference type="ChEBI" id="CHEBI:33019"/>
        <dbReference type="ChEBI" id="CHEBI:61555"/>
        <dbReference type="ChEBI" id="CHEBI:246422"/>
        <dbReference type="EC" id="3.6.1.23"/>
    </reaction>
</comment>
<comment type="cofactor">
    <cofactor evidence="1">
        <name>Mg(2+)</name>
        <dbReference type="ChEBI" id="CHEBI:18420"/>
    </cofactor>
</comment>
<comment type="pathway">
    <text evidence="1">Pyrimidine metabolism; dUMP biosynthesis; dUMP from dCTP (dUTP route): step 2/2.</text>
</comment>
<comment type="subunit">
    <text evidence="1">Homotrimer.</text>
</comment>
<comment type="similarity">
    <text evidence="1">Belongs to the dUTPase family.</text>
</comment>